<name>SIR42_CAEEL</name>
<accession>Q20481</accession>
<evidence type="ECO:0000255" key="1">
    <source>
        <dbReference type="HAMAP-Rule" id="MF_03161"/>
    </source>
</evidence>
<evidence type="ECO:0000255" key="2">
    <source>
        <dbReference type="PROSITE-ProRule" id="PRU00236"/>
    </source>
</evidence>
<evidence type="ECO:0000269" key="3">
    <source>
    </source>
</evidence>
<evidence type="ECO:0000269" key="4">
    <source>
    </source>
</evidence>
<protein>
    <recommendedName>
        <fullName evidence="1">NAD-dependent protein deacylase sir-2.3</fullName>
        <ecNumber evidence="1 2">2.3.1.286</ecNumber>
    </recommendedName>
    <alternativeName>
        <fullName evidence="1">Regulatory protein SIR2 homolog 3</fullName>
    </alternativeName>
</protein>
<comment type="function">
    <text evidence="1 3 4">NAD-dependent protein deacylase. Catalyzes the NAD-dependent hydrolysis of acyl groups from lysine residues. Plays a role in oxidative stress resistance (PubMed:23438705). Might promote neuronal cell death under ischemic conditions and cell death in touch neurons induced by mec-4 channel hyperactivation, possibly downstream of the insulin-like receptor daf-2 (PubMed:28820880). Might attenuate the reactive oxygen species (ROS) scavenging system, that eliminates ROS in ischemic conditions, under dietary deprivation and when glycolysis is blocked (PubMed:28820880).</text>
</comment>
<comment type="catalytic activity">
    <reaction evidence="1">
        <text>N(6)-acetyl-L-lysyl-[protein] + NAD(+) + H2O = 2''-O-acetyl-ADP-D-ribose + nicotinamide + L-lysyl-[protein]</text>
        <dbReference type="Rhea" id="RHEA:43636"/>
        <dbReference type="Rhea" id="RHEA-COMP:9752"/>
        <dbReference type="Rhea" id="RHEA-COMP:10731"/>
        <dbReference type="ChEBI" id="CHEBI:15377"/>
        <dbReference type="ChEBI" id="CHEBI:17154"/>
        <dbReference type="ChEBI" id="CHEBI:29969"/>
        <dbReference type="ChEBI" id="CHEBI:57540"/>
        <dbReference type="ChEBI" id="CHEBI:61930"/>
        <dbReference type="ChEBI" id="CHEBI:83767"/>
        <dbReference type="EC" id="2.3.1.286"/>
    </reaction>
</comment>
<comment type="cofactor">
    <cofactor evidence="1">
        <name>Zn(2+)</name>
        <dbReference type="ChEBI" id="CHEBI:29105"/>
    </cofactor>
    <text evidence="1">Binds 1 zinc ion per subunit.</text>
</comment>
<comment type="subunit">
    <text evidence="3">Interacts with pyc-1, pcca-1 and mccc-1.</text>
</comment>
<comment type="subcellular location">
    <subcellularLocation>
        <location evidence="1">Mitochondrion matrix</location>
    </subcellularLocation>
    <subcellularLocation>
        <location evidence="3">Mitochondrion</location>
    </subcellularLocation>
</comment>
<comment type="tissue specificity">
    <text evidence="3">Ubiquitously expressed with high expression in the pharynx, body wall muscles and gonad. Strong expression in a subset of non-neuronal cells in the head.</text>
</comment>
<comment type="developmental stage">
    <text evidence="3">Expression starts at the 100 cell stage during embryogenesis and is expressed throughout development until adulthood.</text>
</comment>
<comment type="miscellaneous">
    <text evidence="1">This protein may be expected to contain an N-terminal transit peptide but none has been predicted.</text>
</comment>
<comment type="similarity">
    <text evidence="1">Belongs to the sirtuin family. Class II subfamily.</text>
</comment>
<proteinExistence type="evidence at protein level"/>
<sequence length="287" mass="32464">MARKYVPHTTELCENSLKKFKSLVGTVDKLLIITGAGISTESGIPDYRSKDVGLYTKTALEPIYFQDFMKSKKCRQRYWSRSYLNWPRFAQALPNFNHYALSKWEAANKFHWLITQNVDGLHLKAGSKMITELHGNALQVKCTSCEYIETRQTYQDRLNYANPGFKEQFVSPGQQELDADTALPLGSEQGFKIPECLNCGGLMKTDVTLFGENLNTDKIKVCGKKVNECNGVLTLGTSLEVLSGYQIVNHAHMQNKPIFIVNIGPTRADQMATMKLDYRISDVLKEM</sequence>
<organism>
    <name type="scientific">Caenorhabditis elegans</name>
    <dbReference type="NCBI Taxonomy" id="6239"/>
    <lineage>
        <taxon>Eukaryota</taxon>
        <taxon>Metazoa</taxon>
        <taxon>Ecdysozoa</taxon>
        <taxon>Nematoda</taxon>
        <taxon>Chromadorea</taxon>
        <taxon>Rhabditida</taxon>
        <taxon>Rhabditina</taxon>
        <taxon>Rhabditomorpha</taxon>
        <taxon>Rhabditoidea</taxon>
        <taxon>Rhabditidae</taxon>
        <taxon>Peloderinae</taxon>
        <taxon>Caenorhabditis</taxon>
    </lineage>
</organism>
<feature type="chain" id="PRO_0000417346" description="NAD-dependent protein deacylase sir-2.3">
    <location>
        <begin position="1"/>
        <end position="287"/>
    </location>
</feature>
<feature type="domain" description="Deacetylase sirtuin-type" evidence="2">
    <location>
        <begin position="10"/>
        <end position="287"/>
    </location>
</feature>
<feature type="active site" description="Proton acceptor" evidence="2">
    <location>
        <position position="134"/>
    </location>
</feature>
<feature type="binding site" evidence="1">
    <location>
        <begin position="35"/>
        <end position="55"/>
    </location>
    <ligand>
        <name>NAD(+)</name>
        <dbReference type="ChEBI" id="CHEBI:57540"/>
    </ligand>
</feature>
<feature type="binding site" evidence="1">
    <location>
        <begin position="116"/>
        <end position="119"/>
    </location>
    <ligand>
        <name>NAD(+)</name>
        <dbReference type="ChEBI" id="CHEBI:57540"/>
    </ligand>
</feature>
<feature type="binding site" evidence="1">
    <location>
        <position position="142"/>
    </location>
    <ligand>
        <name>Zn(2+)</name>
        <dbReference type="ChEBI" id="CHEBI:29105"/>
    </ligand>
</feature>
<feature type="binding site" evidence="1">
    <location>
        <position position="145"/>
    </location>
    <ligand>
        <name>Zn(2+)</name>
        <dbReference type="ChEBI" id="CHEBI:29105"/>
    </ligand>
</feature>
<feature type="binding site" evidence="1">
    <location>
        <position position="196"/>
    </location>
    <ligand>
        <name>Zn(2+)</name>
        <dbReference type="ChEBI" id="CHEBI:29105"/>
    </ligand>
</feature>
<feature type="binding site" evidence="1">
    <location>
        <position position="199"/>
    </location>
    <ligand>
        <name>Zn(2+)</name>
        <dbReference type="ChEBI" id="CHEBI:29105"/>
    </ligand>
</feature>
<feature type="binding site" evidence="1">
    <location>
        <begin position="236"/>
        <end position="238"/>
    </location>
    <ligand>
        <name>NAD(+)</name>
        <dbReference type="ChEBI" id="CHEBI:57540"/>
    </ligand>
</feature>
<feature type="binding site" evidence="1">
    <location>
        <begin position="262"/>
        <end position="264"/>
    </location>
    <ligand>
        <name>NAD(+)</name>
        <dbReference type="ChEBI" id="CHEBI:57540"/>
    </ligand>
</feature>
<feature type="binding site" evidence="1">
    <location>
        <position position="280"/>
    </location>
    <ligand>
        <name>NAD(+)</name>
        <dbReference type="ChEBI" id="CHEBI:57540"/>
    </ligand>
</feature>
<gene>
    <name type="primary">sir-2.3</name>
    <name type="ORF">F46G10.3</name>
</gene>
<reference key="1">
    <citation type="journal article" date="1998" name="Science">
        <title>Genome sequence of the nematode C. elegans: a platform for investigating biology.</title>
        <authorList>
            <consortium name="The C. elegans sequencing consortium"/>
        </authorList>
    </citation>
    <scope>NUCLEOTIDE SEQUENCE [LARGE SCALE GENOMIC DNA]</scope>
    <source>
        <strain>Bristol N2</strain>
    </source>
</reference>
<reference key="2">
    <citation type="journal article" date="2013" name="Mitochondrion">
        <title>Mitochondrial SIRT4-type proteins in Caenorhabditis elegans and mammals interact with pyruvate carboxylase and other acetylated biotin-dependent carboxylases.</title>
        <authorList>
            <person name="Wirth M."/>
            <person name="Karaca S."/>
            <person name="Wenzel D."/>
            <person name="Ho L."/>
            <person name="Tishkoff D."/>
            <person name="Lombard D.B."/>
            <person name="Verdin E."/>
            <person name="Urlaub H."/>
            <person name="Jedrusik-Bode M."/>
            <person name="Fischle W."/>
        </authorList>
    </citation>
    <scope>FUNCTION</scope>
    <scope>INTERACTION WITH PYC-1; PCCA-1 AND MCCC-1</scope>
    <scope>SUBCELLULAR LOCATION</scope>
    <scope>TISSUE SPECIFICITY</scope>
    <scope>DEVELOPMENTAL STAGE</scope>
</reference>
<reference key="3">
    <citation type="journal article" date="2017" name="PLoS Genet.">
        <title>Knock-out of a mitochondrial sirtuin protects neurons from degeneration in Caenorhabditis elegans.</title>
        <authorList>
            <person name="Sangaletti R."/>
            <person name="D'Amico M."/>
            <person name="Grant J."/>
            <person name="Della-Morte D."/>
            <person name="Bianchi L."/>
        </authorList>
    </citation>
    <scope>FUNCTION</scope>
</reference>
<dbReference type="EC" id="2.3.1.286" evidence="1 2"/>
<dbReference type="EMBL" id="Z50177">
    <property type="protein sequence ID" value="CAA90547.1"/>
    <property type="molecule type" value="Genomic_DNA"/>
</dbReference>
<dbReference type="PIR" id="T22325">
    <property type="entry name" value="T22325"/>
</dbReference>
<dbReference type="RefSeq" id="NP_510220.1">
    <property type="nucleotide sequence ID" value="NM_077819.4"/>
</dbReference>
<dbReference type="SMR" id="Q20481"/>
<dbReference type="BioGRID" id="50633">
    <property type="interactions" value="3"/>
</dbReference>
<dbReference type="FunCoup" id="Q20481">
    <property type="interactions" value="1474"/>
</dbReference>
<dbReference type="STRING" id="6239.F46G10.3.1"/>
<dbReference type="PaxDb" id="6239-F46G10.3"/>
<dbReference type="EnsemblMetazoa" id="F46G10.3.1">
    <property type="protein sequence ID" value="F46G10.3.1"/>
    <property type="gene ID" value="WBGene00004802"/>
</dbReference>
<dbReference type="EnsemblMetazoa" id="F46G10.3.2">
    <property type="protein sequence ID" value="F46G10.3.2"/>
    <property type="gene ID" value="WBGene00004802"/>
</dbReference>
<dbReference type="GeneID" id="185876"/>
<dbReference type="KEGG" id="cel:CELE_F46G10.3"/>
<dbReference type="UCSC" id="F46G10.3">
    <property type="organism name" value="c. elegans"/>
</dbReference>
<dbReference type="AGR" id="WB:WBGene00004802"/>
<dbReference type="CTD" id="185876"/>
<dbReference type="WormBase" id="F46G10.3">
    <property type="protein sequence ID" value="CE02239"/>
    <property type="gene ID" value="WBGene00004802"/>
    <property type="gene designation" value="sir-2.3"/>
</dbReference>
<dbReference type="eggNOG" id="KOG2683">
    <property type="taxonomic scope" value="Eukaryota"/>
</dbReference>
<dbReference type="GeneTree" id="ENSGT00940000158891"/>
<dbReference type="HOGENOM" id="CLU_023643_3_2_1"/>
<dbReference type="InParanoid" id="Q20481"/>
<dbReference type="OMA" id="ACLSCKH"/>
<dbReference type="OrthoDB" id="424302at2759"/>
<dbReference type="PhylomeDB" id="Q20481"/>
<dbReference type="PRO" id="PR:Q20481"/>
<dbReference type="Proteomes" id="UP000001940">
    <property type="component" value="Chromosome X"/>
</dbReference>
<dbReference type="Bgee" id="WBGene00004802">
    <property type="expression patterns" value="Expressed in embryo and 2 other cell types or tissues"/>
</dbReference>
<dbReference type="GO" id="GO:0005759">
    <property type="term" value="C:mitochondrial matrix"/>
    <property type="evidence" value="ECO:0000318"/>
    <property type="project" value="GO_Central"/>
</dbReference>
<dbReference type="GO" id="GO:0005739">
    <property type="term" value="C:mitochondrion"/>
    <property type="evidence" value="ECO:0000314"/>
    <property type="project" value="WormBase"/>
</dbReference>
<dbReference type="GO" id="GO:0017136">
    <property type="term" value="F:histone deacetylase activity, NAD-dependent"/>
    <property type="evidence" value="ECO:0000318"/>
    <property type="project" value="GO_Central"/>
</dbReference>
<dbReference type="GO" id="GO:0070403">
    <property type="term" value="F:NAD+ binding"/>
    <property type="evidence" value="ECO:0000318"/>
    <property type="project" value="GO_Central"/>
</dbReference>
<dbReference type="GO" id="GO:0008270">
    <property type="term" value="F:zinc ion binding"/>
    <property type="evidence" value="ECO:0007669"/>
    <property type="project" value="UniProtKB-UniRule"/>
</dbReference>
<dbReference type="CDD" id="cd01409">
    <property type="entry name" value="SIRT4"/>
    <property type="match status" value="1"/>
</dbReference>
<dbReference type="Gene3D" id="3.30.1600.10">
    <property type="entry name" value="SIR2/SIRT2 'Small Domain"/>
    <property type="match status" value="1"/>
</dbReference>
<dbReference type="Gene3D" id="3.40.50.1220">
    <property type="entry name" value="TPP-binding domain"/>
    <property type="match status" value="1"/>
</dbReference>
<dbReference type="HAMAP" id="MF_01967">
    <property type="entry name" value="Sirtuin_ClassII"/>
    <property type="match status" value="1"/>
</dbReference>
<dbReference type="InterPro" id="IPR029035">
    <property type="entry name" value="DHS-like_NAD/FAD-binding_dom"/>
</dbReference>
<dbReference type="InterPro" id="IPR050134">
    <property type="entry name" value="NAD-dep_sirtuin_deacylases"/>
</dbReference>
<dbReference type="InterPro" id="IPR003000">
    <property type="entry name" value="Sirtuin"/>
</dbReference>
<dbReference type="InterPro" id="IPR026591">
    <property type="entry name" value="Sirtuin_cat_small_dom_sf"/>
</dbReference>
<dbReference type="InterPro" id="IPR026587">
    <property type="entry name" value="Sirtuin_class_II"/>
</dbReference>
<dbReference type="InterPro" id="IPR026590">
    <property type="entry name" value="Ssirtuin_cat_dom"/>
</dbReference>
<dbReference type="PANTHER" id="PTHR11085">
    <property type="entry name" value="NAD-DEPENDENT PROTEIN DEACYLASE SIRTUIN-5, MITOCHONDRIAL-RELATED"/>
    <property type="match status" value="1"/>
</dbReference>
<dbReference type="PANTHER" id="PTHR11085:SF10">
    <property type="entry name" value="NAD-DEPENDENT PROTEIN DEACYLASE SIRTUIN-5, MITOCHONDRIAL-RELATED"/>
    <property type="match status" value="1"/>
</dbReference>
<dbReference type="Pfam" id="PF02146">
    <property type="entry name" value="SIR2"/>
    <property type="match status" value="1"/>
</dbReference>
<dbReference type="SUPFAM" id="SSF52467">
    <property type="entry name" value="DHS-like NAD/FAD-binding domain"/>
    <property type="match status" value="1"/>
</dbReference>
<dbReference type="PROSITE" id="PS50305">
    <property type="entry name" value="SIRTUIN"/>
    <property type="match status" value="1"/>
</dbReference>
<keyword id="KW-0479">Metal-binding</keyword>
<keyword id="KW-0496">Mitochondrion</keyword>
<keyword id="KW-0520">NAD</keyword>
<keyword id="KW-1185">Reference proteome</keyword>
<keyword id="KW-0808">Transferase</keyword>
<keyword id="KW-0862">Zinc</keyword>